<gene>
    <name evidence="1" type="primary">dxs</name>
    <name type="ordered locus">A2cp1_1225</name>
</gene>
<proteinExistence type="inferred from homology"/>
<reference key="1">
    <citation type="submission" date="2009-01" db="EMBL/GenBank/DDBJ databases">
        <title>Complete sequence of Anaeromyxobacter dehalogenans 2CP-1.</title>
        <authorList>
            <person name="Lucas S."/>
            <person name="Copeland A."/>
            <person name="Lapidus A."/>
            <person name="Glavina del Rio T."/>
            <person name="Dalin E."/>
            <person name="Tice H."/>
            <person name="Bruce D."/>
            <person name="Goodwin L."/>
            <person name="Pitluck S."/>
            <person name="Saunders E."/>
            <person name="Brettin T."/>
            <person name="Detter J.C."/>
            <person name="Han C."/>
            <person name="Larimer F."/>
            <person name="Land M."/>
            <person name="Hauser L."/>
            <person name="Kyrpides N."/>
            <person name="Ovchinnikova G."/>
            <person name="Beliaev A.S."/>
            <person name="Richardson P."/>
        </authorList>
    </citation>
    <scope>NUCLEOTIDE SEQUENCE [LARGE SCALE GENOMIC DNA]</scope>
    <source>
        <strain>2CP-1 / ATCC BAA-258</strain>
    </source>
</reference>
<evidence type="ECO:0000255" key="1">
    <source>
        <dbReference type="HAMAP-Rule" id="MF_00315"/>
    </source>
</evidence>
<dbReference type="EC" id="2.2.1.7" evidence="1"/>
<dbReference type="EMBL" id="CP001359">
    <property type="protein sequence ID" value="ACL64569.1"/>
    <property type="molecule type" value="Genomic_DNA"/>
</dbReference>
<dbReference type="RefSeq" id="WP_012632552.1">
    <property type="nucleotide sequence ID" value="NC_011891.1"/>
</dbReference>
<dbReference type="SMR" id="B8JFY1"/>
<dbReference type="KEGG" id="acp:A2cp1_1225"/>
<dbReference type="HOGENOM" id="CLU_009227_1_4_7"/>
<dbReference type="UniPathway" id="UPA00064">
    <property type="reaction ID" value="UER00091"/>
</dbReference>
<dbReference type="Proteomes" id="UP000007089">
    <property type="component" value="Chromosome"/>
</dbReference>
<dbReference type="GO" id="GO:0005829">
    <property type="term" value="C:cytosol"/>
    <property type="evidence" value="ECO:0007669"/>
    <property type="project" value="TreeGrafter"/>
</dbReference>
<dbReference type="GO" id="GO:0008661">
    <property type="term" value="F:1-deoxy-D-xylulose-5-phosphate synthase activity"/>
    <property type="evidence" value="ECO:0007669"/>
    <property type="project" value="UniProtKB-UniRule"/>
</dbReference>
<dbReference type="GO" id="GO:0000287">
    <property type="term" value="F:magnesium ion binding"/>
    <property type="evidence" value="ECO:0007669"/>
    <property type="project" value="UniProtKB-UniRule"/>
</dbReference>
<dbReference type="GO" id="GO:0030976">
    <property type="term" value="F:thiamine pyrophosphate binding"/>
    <property type="evidence" value="ECO:0007669"/>
    <property type="project" value="UniProtKB-UniRule"/>
</dbReference>
<dbReference type="GO" id="GO:0052865">
    <property type="term" value="P:1-deoxy-D-xylulose 5-phosphate biosynthetic process"/>
    <property type="evidence" value="ECO:0007669"/>
    <property type="project" value="UniProtKB-UniPathway"/>
</dbReference>
<dbReference type="GO" id="GO:0019288">
    <property type="term" value="P:isopentenyl diphosphate biosynthetic process, methylerythritol 4-phosphate pathway"/>
    <property type="evidence" value="ECO:0007669"/>
    <property type="project" value="TreeGrafter"/>
</dbReference>
<dbReference type="GO" id="GO:0016114">
    <property type="term" value="P:terpenoid biosynthetic process"/>
    <property type="evidence" value="ECO:0007669"/>
    <property type="project" value="UniProtKB-UniRule"/>
</dbReference>
<dbReference type="GO" id="GO:0009228">
    <property type="term" value="P:thiamine biosynthetic process"/>
    <property type="evidence" value="ECO:0007669"/>
    <property type="project" value="UniProtKB-UniRule"/>
</dbReference>
<dbReference type="CDD" id="cd02007">
    <property type="entry name" value="TPP_DXS"/>
    <property type="match status" value="1"/>
</dbReference>
<dbReference type="CDD" id="cd07033">
    <property type="entry name" value="TPP_PYR_DXS_TK_like"/>
    <property type="match status" value="1"/>
</dbReference>
<dbReference type="FunFam" id="3.40.50.920:FF:000002">
    <property type="entry name" value="1-deoxy-D-xylulose-5-phosphate synthase"/>
    <property type="match status" value="1"/>
</dbReference>
<dbReference type="FunFam" id="3.40.50.970:FF:000005">
    <property type="entry name" value="1-deoxy-D-xylulose-5-phosphate synthase"/>
    <property type="match status" value="1"/>
</dbReference>
<dbReference type="Gene3D" id="3.40.50.920">
    <property type="match status" value="1"/>
</dbReference>
<dbReference type="Gene3D" id="3.40.50.970">
    <property type="match status" value="2"/>
</dbReference>
<dbReference type="HAMAP" id="MF_00315">
    <property type="entry name" value="DXP_synth"/>
    <property type="match status" value="1"/>
</dbReference>
<dbReference type="InterPro" id="IPR005477">
    <property type="entry name" value="Dxylulose-5-P_synthase"/>
</dbReference>
<dbReference type="InterPro" id="IPR029061">
    <property type="entry name" value="THDP-binding"/>
</dbReference>
<dbReference type="InterPro" id="IPR009014">
    <property type="entry name" value="Transketo_C/PFOR_II"/>
</dbReference>
<dbReference type="InterPro" id="IPR005475">
    <property type="entry name" value="Transketolase-like_Pyr-bd"/>
</dbReference>
<dbReference type="InterPro" id="IPR033248">
    <property type="entry name" value="Transketolase_C"/>
</dbReference>
<dbReference type="InterPro" id="IPR049557">
    <property type="entry name" value="Transketolase_CS"/>
</dbReference>
<dbReference type="NCBIfam" id="TIGR00204">
    <property type="entry name" value="dxs"/>
    <property type="match status" value="1"/>
</dbReference>
<dbReference type="NCBIfam" id="NF003933">
    <property type="entry name" value="PRK05444.2-2"/>
    <property type="match status" value="1"/>
</dbReference>
<dbReference type="PANTHER" id="PTHR43322">
    <property type="entry name" value="1-D-DEOXYXYLULOSE 5-PHOSPHATE SYNTHASE-RELATED"/>
    <property type="match status" value="1"/>
</dbReference>
<dbReference type="PANTHER" id="PTHR43322:SF5">
    <property type="entry name" value="1-DEOXY-D-XYLULOSE-5-PHOSPHATE SYNTHASE, CHLOROPLASTIC"/>
    <property type="match status" value="1"/>
</dbReference>
<dbReference type="Pfam" id="PF13292">
    <property type="entry name" value="DXP_synthase_N"/>
    <property type="match status" value="1"/>
</dbReference>
<dbReference type="Pfam" id="PF02779">
    <property type="entry name" value="Transket_pyr"/>
    <property type="match status" value="1"/>
</dbReference>
<dbReference type="Pfam" id="PF02780">
    <property type="entry name" value="Transketolase_C"/>
    <property type="match status" value="1"/>
</dbReference>
<dbReference type="SMART" id="SM00861">
    <property type="entry name" value="Transket_pyr"/>
    <property type="match status" value="1"/>
</dbReference>
<dbReference type="SUPFAM" id="SSF52518">
    <property type="entry name" value="Thiamin diphosphate-binding fold (THDP-binding)"/>
    <property type="match status" value="2"/>
</dbReference>
<dbReference type="SUPFAM" id="SSF52922">
    <property type="entry name" value="TK C-terminal domain-like"/>
    <property type="match status" value="1"/>
</dbReference>
<dbReference type="PROSITE" id="PS00801">
    <property type="entry name" value="TRANSKETOLASE_1"/>
    <property type="match status" value="1"/>
</dbReference>
<name>DXS_ANAD2</name>
<comment type="function">
    <text evidence="1">Catalyzes the acyloin condensation reaction between C atoms 2 and 3 of pyruvate and glyceraldehyde 3-phosphate to yield 1-deoxy-D-xylulose-5-phosphate (DXP).</text>
</comment>
<comment type="catalytic activity">
    <reaction evidence="1">
        <text>D-glyceraldehyde 3-phosphate + pyruvate + H(+) = 1-deoxy-D-xylulose 5-phosphate + CO2</text>
        <dbReference type="Rhea" id="RHEA:12605"/>
        <dbReference type="ChEBI" id="CHEBI:15361"/>
        <dbReference type="ChEBI" id="CHEBI:15378"/>
        <dbReference type="ChEBI" id="CHEBI:16526"/>
        <dbReference type="ChEBI" id="CHEBI:57792"/>
        <dbReference type="ChEBI" id="CHEBI:59776"/>
        <dbReference type="EC" id="2.2.1.7"/>
    </reaction>
</comment>
<comment type="cofactor">
    <cofactor evidence="1">
        <name>Mg(2+)</name>
        <dbReference type="ChEBI" id="CHEBI:18420"/>
    </cofactor>
    <text evidence="1">Binds 1 Mg(2+) ion per subunit.</text>
</comment>
<comment type="cofactor">
    <cofactor evidence="1">
        <name>thiamine diphosphate</name>
        <dbReference type="ChEBI" id="CHEBI:58937"/>
    </cofactor>
    <text evidence="1">Binds 1 thiamine pyrophosphate per subunit.</text>
</comment>
<comment type="pathway">
    <text evidence="1">Metabolic intermediate biosynthesis; 1-deoxy-D-xylulose 5-phosphate biosynthesis; 1-deoxy-D-xylulose 5-phosphate from D-glyceraldehyde 3-phosphate and pyruvate: step 1/1.</text>
</comment>
<comment type="subunit">
    <text evidence="1">Homodimer.</text>
</comment>
<comment type="similarity">
    <text evidence="1">Belongs to the transketolase family. DXPS subfamily.</text>
</comment>
<protein>
    <recommendedName>
        <fullName evidence="1">1-deoxy-D-xylulose-5-phosphate synthase</fullName>
        <ecNumber evidence="1">2.2.1.7</ecNumber>
    </recommendedName>
    <alternativeName>
        <fullName evidence="1">1-deoxyxylulose-5-phosphate synthase</fullName>
        <shortName evidence="1">DXP synthase</shortName>
        <shortName evidence="1">DXPS</shortName>
    </alternativeName>
</protein>
<accession>B8JFY1</accession>
<organism>
    <name type="scientific">Anaeromyxobacter dehalogenans (strain 2CP-1 / ATCC BAA-258)</name>
    <dbReference type="NCBI Taxonomy" id="455488"/>
    <lineage>
        <taxon>Bacteria</taxon>
        <taxon>Pseudomonadati</taxon>
        <taxon>Myxococcota</taxon>
        <taxon>Myxococcia</taxon>
        <taxon>Myxococcales</taxon>
        <taxon>Cystobacterineae</taxon>
        <taxon>Anaeromyxobacteraceae</taxon>
        <taxon>Anaeromyxobacter</taxon>
    </lineage>
</organism>
<sequence>MGRLLDTIDSPTDLKKVPVEQLPALCQEIREQIIQTCARNGGHLGSSLGAVEINVALHHVFSSPQDKLVWDVGHQAYAHKLLTGRREAFRTIRTEGGLAGFPERHESAHDAFGVGHASTAISAALGMIEAKRVTGEPGKVVAVVGDGAMTGGVAFEGLNQAGYLGRNLLVVLNDNEMSISPNVGALSEWFSKKFASRTYNRWRRQVKEFLESVPKGPEAIEIIRHGINATKALVTPGILFEGLGFHYVGPVDGHDVKGLVETFQKLAIFDGPVLLHAITTKGKGYHPAESDKATRGHGLSFFDVATGKPVKKSPGAKAYTDLFAEALCEEMEHDPRVVAITAAMLEGTGLIKAKQRFPDRTYDVGIAEQHAVTFAAGLACEGIRPVVAIYSTFLQRAYDQIIHDVALQKLPVTFALDRGGLVGADGKTHQGAFDLAYLRCVPGLVVMAPSDENELRHMLHTSLQHDGPAALRYPRGAGEGVALEPARVLEIGKGRLARNVPGKPDVCVVAAGTTLKAALAAAEALAAEGVAATVVDPRFVKPLDEELICAEAGRAKRVVTVEEGCLAGGFGTACLEAFERRGLLEAGLGVRRLGIPDEFITHAEQAKQRAWVGIDADAIAAACRALVGDRKARGVA</sequence>
<keyword id="KW-0414">Isoprene biosynthesis</keyword>
<keyword id="KW-0460">Magnesium</keyword>
<keyword id="KW-0479">Metal-binding</keyword>
<keyword id="KW-0784">Thiamine biosynthesis</keyword>
<keyword id="KW-0786">Thiamine pyrophosphate</keyword>
<keyword id="KW-0808">Transferase</keyword>
<feature type="chain" id="PRO_1000132918" description="1-deoxy-D-xylulose-5-phosphate synthase">
    <location>
        <begin position="1"/>
        <end position="636"/>
    </location>
</feature>
<feature type="binding site" evidence="1">
    <location>
        <position position="74"/>
    </location>
    <ligand>
        <name>thiamine diphosphate</name>
        <dbReference type="ChEBI" id="CHEBI:58937"/>
    </ligand>
</feature>
<feature type="binding site" evidence="1">
    <location>
        <begin position="115"/>
        <end position="117"/>
    </location>
    <ligand>
        <name>thiamine diphosphate</name>
        <dbReference type="ChEBI" id="CHEBI:58937"/>
    </ligand>
</feature>
<feature type="binding site" evidence="1">
    <location>
        <position position="146"/>
    </location>
    <ligand>
        <name>Mg(2+)</name>
        <dbReference type="ChEBI" id="CHEBI:18420"/>
    </ligand>
</feature>
<feature type="binding site" evidence="1">
    <location>
        <begin position="147"/>
        <end position="148"/>
    </location>
    <ligand>
        <name>thiamine diphosphate</name>
        <dbReference type="ChEBI" id="CHEBI:58937"/>
    </ligand>
</feature>
<feature type="binding site" evidence="1">
    <location>
        <position position="175"/>
    </location>
    <ligand>
        <name>Mg(2+)</name>
        <dbReference type="ChEBI" id="CHEBI:18420"/>
    </ligand>
</feature>
<feature type="binding site" evidence="1">
    <location>
        <position position="175"/>
    </location>
    <ligand>
        <name>thiamine diphosphate</name>
        <dbReference type="ChEBI" id="CHEBI:58937"/>
    </ligand>
</feature>
<feature type="binding site" evidence="1">
    <location>
        <position position="285"/>
    </location>
    <ligand>
        <name>thiamine diphosphate</name>
        <dbReference type="ChEBI" id="CHEBI:58937"/>
    </ligand>
</feature>
<feature type="binding site" evidence="1">
    <location>
        <position position="368"/>
    </location>
    <ligand>
        <name>thiamine diphosphate</name>
        <dbReference type="ChEBI" id="CHEBI:58937"/>
    </ligand>
</feature>